<protein>
    <recommendedName>
        <fullName evidence="2">Disulfide bond formation protein B</fullName>
    </recommendedName>
    <alternativeName>
        <fullName evidence="2">Disulfide oxidoreductase</fullName>
    </alternativeName>
</protein>
<feature type="chain" id="PRO_0000059356" description="Disulfide bond formation protein B">
    <location>
        <begin position="1"/>
        <end position="176"/>
    </location>
</feature>
<feature type="topological domain" description="Cytoplasmic" evidence="2">
    <location>
        <begin position="1"/>
        <end position="14"/>
    </location>
</feature>
<feature type="transmembrane region" description="Helical" evidence="2">
    <location>
        <begin position="15"/>
        <end position="31"/>
    </location>
</feature>
<feature type="topological domain" description="Periplasmic" evidence="2">
    <location>
        <begin position="32"/>
        <end position="49"/>
    </location>
</feature>
<feature type="transmembrane region" description="Helical" evidence="2">
    <location>
        <begin position="50"/>
        <end position="65"/>
    </location>
</feature>
<feature type="topological domain" description="Cytoplasmic" evidence="2">
    <location>
        <begin position="66"/>
        <end position="71"/>
    </location>
</feature>
<feature type="transmembrane region" description="Helical" evidence="2">
    <location>
        <begin position="72"/>
        <end position="89"/>
    </location>
</feature>
<feature type="topological domain" description="Periplasmic" evidence="2">
    <location>
        <begin position="90"/>
        <end position="144"/>
    </location>
</feature>
<feature type="transmembrane region" description="Helical" evidence="2">
    <location>
        <begin position="145"/>
        <end position="163"/>
    </location>
</feature>
<feature type="topological domain" description="Cytoplasmic" evidence="2">
    <location>
        <begin position="164"/>
        <end position="176"/>
    </location>
</feature>
<feature type="disulfide bond" description="Redox-active" evidence="2">
    <location>
        <begin position="41"/>
        <end position="44"/>
    </location>
</feature>
<feature type="disulfide bond" description="Redox-active" evidence="2">
    <location>
        <begin position="104"/>
        <end position="130"/>
    </location>
</feature>
<proteinExistence type="inferred from homology"/>
<sequence length="176" mass="20063">MLRFLNQCSRGRGAWLLMAFTALALEMVALWFQHVMLLKPCVLCIYERCALFGVMGAGLVGAIAPKTPLRYVAMVIWIYSAWRGLQLAYEHTMIQLHPSPFMTCDFMARFPDWLPLGKWLPQVFVASGDCAERQWSFLTLEMPQWLLGIFAAYLVVAIAVVIAQAFKPKKRDLFGR</sequence>
<reference key="1">
    <citation type="journal article" date="2001" name="Nature">
        <title>Complete genome sequence of Salmonella enterica serovar Typhimurium LT2.</title>
        <authorList>
            <person name="McClelland M."/>
            <person name="Sanderson K.E."/>
            <person name="Spieth J."/>
            <person name="Clifton S.W."/>
            <person name="Latreille P."/>
            <person name="Courtney L."/>
            <person name="Porwollik S."/>
            <person name="Ali J."/>
            <person name="Dante M."/>
            <person name="Du F."/>
            <person name="Hou S."/>
            <person name="Layman D."/>
            <person name="Leonard S."/>
            <person name="Nguyen C."/>
            <person name="Scott K."/>
            <person name="Holmes A."/>
            <person name="Grewal N."/>
            <person name="Mulvaney E."/>
            <person name="Ryan E."/>
            <person name="Sun H."/>
            <person name="Florea L."/>
            <person name="Miller W."/>
            <person name="Stoneking T."/>
            <person name="Nhan M."/>
            <person name="Waterston R."/>
            <person name="Wilson R.K."/>
        </authorList>
    </citation>
    <scope>NUCLEOTIDE SEQUENCE [LARGE SCALE GENOMIC DNA]</scope>
    <source>
        <strain>LT2 / SGSC1412 / ATCC 700720</strain>
    </source>
</reference>
<keyword id="KW-0997">Cell inner membrane</keyword>
<keyword id="KW-1003">Cell membrane</keyword>
<keyword id="KW-0143">Chaperone</keyword>
<keyword id="KW-1015">Disulfide bond</keyword>
<keyword id="KW-0249">Electron transport</keyword>
<keyword id="KW-0472">Membrane</keyword>
<keyword id="KW-0560">Oxidoreductase</keyword>
<keyword id="KW-0676">Redox-active center</keyword>
<keyword id="KW-1185">Reference proteome</keyword>
<keyword id="KW-0812">Transmembrane</keyword>
<keyword id="KW-1133">Transmembrane helix</keyword>
<keyword id="KW-0813">Transport</keyword>
<comment type="function">
    <text evidence="1">Required for disulfide bond formation in some periplasmic proteins such as PhoA or OmpA. Acts by oxidizing the DsbA protein (By similarity).</text>
</comment>
<comment type="subcellular location">
    <subcellularLocation>
        <location evidence="2">Cell inner membrane</location>
        <topology evidence="2">Multi-pass membrane protein</topology>
    </subcellularLocation>
</comment>
<comment type="similarity">
    <text evidence="2">Belongs to the DsbB family.</text>
</comment>
<accession>P63993</accession>
<accession>Q8XG65</accession>
<dbReference type="EMBL" id="AE006468">
    <property type="protein sequence ID" value="AAL20722.1"/>
    <property type="molecule type" value="Genomic_DNA"/>
</dbReference>
<dbReference type="RefSeq" id="NP_460763.1">
    <property type="nucleotide sequence ID" value="NC_003197.2"/>
</dbReference>
<dbReference type="RefSeq" id="WP_000943475.1">
    <property type="nucleotide sequence ID" value="NC_003197.2"/>
</dbReference>
<dbReference type="SMR" id="P63993"/>
<dbReference type="STRING" id="99287.STM1807"/>
<dbReference type="PaxDb" id="99287-STM1807"/>
<dbReference type="GeneID" id="1253326"/>
<dbReference type="KEGG" id="stm:STM1807"/>
<dbReference type="PATRIC" id="fig|99287.12.peg.1906"/>
<dbReference type="HOGENOM" id="CLU_098660_2_0_6"/>
<dbReference type="OMA" id="GGALYMQ"/>
<dbReference type="PhylomeDB" id="P63993"/>
<dbReference type="BioCyc" id="SENT99287:STM1807-MONOMER"/>
<dbReference type="Proteomes" id="UP000001014">
    <property type="component" value="Chromosome"/>
</dbReference>
<dbReference type="GO" id="GO:0005886">
    <property type="term" value="C:plasma membrane"/>
    <property type="evidence" value="ECO:0007669"/>
    <property type="project" value="UniProtKB-SubCell"/>
</dbReference>
<dbReference type="GO" id="GO:0009055">
    <property type="term" value="F:electron transfer activity"/>
    <property type="evidence" value="ECO:0007669"/>
    <property type="project" value="UniProtKB-UniRule"/>
</dbReference>
<dbReference type="GO" id="GO:0015035">
    <property type="term" value="F:protein-disulfide reductase activity"/>
    <property type="evidence" value="ECO:0000318"/>
    <property type="project" value="GO_Central"/>
</dbReference>
<dbReference type="GO" id="GO:0006457">
    <property type="term" value="P:protein folding"/>
    <property type="evidence" value="ECO:0000318"/>
    <property type="project" value="GO_Central"/>
</dbReference>
<dbReference type="FunFam" id="1.20.1550.10:FF:000001">
    <property type="entry name" value="Disulfide bond formation protein B"/>
    <property type="match status" value="1"/>
</dbReference>
<dbReference type="Gene3D" id="1.20.1550.10">
    <property type="entry name" value="DsbB-like"/>
    <property type="match status" value="1"/>
</dbReference>
<dbReference type="HAMAP" id="MF_00286">
    <property type="entry name" value="DsbB"/>
    <property type="match status" value="1"/>
</dbReference>
<dbReference type="InterPro" id="IPR003752">
    <property type="entry name" value="DiS_bond_form_DsbB/BdbC"/>
</dbReference>
<dbReference type="InterPro" id="IPR022920">
    <property type="entry name" value="Disulphide_bond_form_DsbB"/>
</dbReference>
<dbReference type="InterPro" id="IPR050183">
    <property type="entry name" value="DsbB"/>
</dbReference>
<dbReference type="InterPro" id="IPR023380">
    <property type="entry name" value="DsbB-like_sf"/>
</dbReference>
<dbReference type="NCBIfam" id="NF002485">
    <property type="entry name" value="PRK01749.1"/>
    <property type="match status" value="1"/>
</dbReference>
<dbReference type="PANTHER" id="PTHR36570">
    <property type="entry name" value="DISULFIDE BOND FORMATION PROTEIN B"/>
    <property type="match status" value="1"/>
</dbReference>
<dbReference type="PANTHER" id="PTHR36570:SF2">
    <property type="entry name" value="DISULFIDE BOND FORMATION PROTEIN B"/>
    <property type="match status" value="1"/>
</dbReference>
<dbReference type="Pfam" id="PF02600">
    <property type="entry name" value="DsbB"/>
    <property type="match status" value="1"/>
</dbReference>
<dbReference type="SUPFAM" id="SSF158442">
    <property type="entry name" value="DsbB-like"/>
    <property type="match status" value="1"/>
</dbReference>
<organism>
    <name type="scientific">Salmonella typhimurium (strain LT2 / SGSC1412 / ATCC 700720)</name>
    <dbReference type="NCBI Taxonomy" id="99287"/>
    <lineage>
        <taxon>Bacteria</taxon>
        <taxon>Pseudomonadati</taxon>
        <taxon>Pseudomonadota</taxon>
        <taxon>Gammaproteobacteria</taxon>
        <taxon>Enterobacterales</taxon>
        <taxon>Enterobacteriaceae</taxon>
        <taxon>Salmonella</taxon>
    </lineage>
</organism>
<name>DSBB_SALTY</name>
<evidence type="ECO:0000250" key="1"/>
<evidence type="ECO:0000255" key="2">
    <source>
        <dbReference type="HAMAP-Rule" id="MF_00286"/>
    </source>
</evidence>
<gene>
    <name evidence="2" type="primary">dsbB</name>
    <name type="ordered locus">STM1807</name>
</gene>